<proteinExistence type="evidence at protein level"/>
<sequence>MKATILLAVLVAVFVAGTEAHSHACTSYWCGKFCGTASCTHYLCRVLHPGKMCACVHCSRVNNPFRVNQVAKSINDLDYTPIMKSMENLDNGMDML</sequence>
<organism>
    <name type="scientific">Mytilus galloprovincialis</name>
    <name type="common">Mediterranean mussel</name>
    <dbReference type="NCBI Taxonomy" id="29158"/>
    <lineage>
        <taxon>Eukaryota</taxon>
        <taxon>Metazoa</taxon>
        <taxon>Spiralia</taxon>
        <taxon>Lophotrochozoa</taxon>
        <taxon>Mollusca</taxon>
        <taxon>Bivalvia</taxon>
        <taxon>Autobranchia</taxon>
        <taxon>Pteriomorphia</taxon>
        <taxon>Mytilida</taxon>
        <taxon>Mytiloidea</taxon>
        <taxon>Mytilidae</taxon>
        <taxon>Mytilinae</taxon>
        <taxon>Mytilus</taxon>
    </lineage>
</organism>
<reference key="1">
    <citation type="journal article" date="1999" name="Eur. J. Biochem.">
        <title>Myticin, a novel cysteine-rich antimicrobial peptide isolated from hemocytes and plasma of the mussel Mytilus galloprovincialis.</title>
        <authorList>
            <person name="Mitta G."/>
            <person name="Hubert F."/>
            <person name="Noel T."/>
            <person name="Roch P."/>
        </authorList>
    </citation>
    <scope>NUCLEOTIDE SEQUENCE [MRNA]</scope>
    <scope>PROTEIN SEQUENCE OF 21-56</scope>
    <scope>MASS SPECTROMETRY</scope>
    <source>
        <tissue>Hemocyte</tissue>
        <tissue>Plasma</tissue>
    </source>
</reference>
<comment type="function">
    <text>Bacteriolytic activity against Gram-positive bacteria M.luteus, B.megaterium and A.viridans.</text>
</comment>
<comment type="subcellular location">
    <subcellularLocation>
        <location>Secreted</location>
    </subcellularLocation>
</comment>
<comment type="tissue specificity">
    <text>Hemocytes.</text>
</comment>
<comment type="PTM">
    <text>Contains four disulfide bonds.</text>
</comment>
<comment type="mass spectrometry"/>
<keyword id="KW-0044">Antibiotic</keyword>
<keyword id="KW-0929">Antimicrobial</keyword>
<keyword id="KW-0903">Direct protein sequencing</keyword>
<keyword id="KW-1015">Disulfide bond</keyword>
<keyword id="KW-0964">Secreted</keyword>
<keyword id="KW-0732">Signal</keyword>
<accession>P82103</accession>
<dbReference type="EMBL" id="AF162334">
    <property type="protein sequence ID" value="AAD47638.1"/>
    <property type="molecule type" value="mRNA"/>
</dbReference>
<dbReference type="GO" id="GO:0005576">
    <property type="term" value="C:extracellular region"/>
    <property type="evidence" value="ECO:0007669"/>
    <property type="project" value="UniProtKB-SubCell"/>
</dbReference>
<dbReference type="GO" id="GO:0042742">
    <property type="term" value="P:defense response to bacterium"/>
    <property type="evidence" value="ECO:0007669"/>
    <property type="project" value="UniProtKB-KW"/>
</dbReference>
<dbReference type="InterPro" id="IPR019631">
    <property type="entry name" value="Myticin_preproprotein"/>
</dbReference>
<dbReference type="Pfam" id="PF10690">
    <property type="entry name" value="Myticin-prepro"/>
    <property type="match status" value="1"/>
</dbReference>
<feature type="signal peptide" evidence="1">
    <location>
        <begin position="1"/>
        <end position="20"/>
    </location>
</feature>
<feature type="peptide" id="PRO_0000004994" description="Myticin-A">
    <location>
        <begin position="21"/>
        <end position="60"/>
    </location>
</feature>
<feature type="propeptide" id="PRO_0000004995" description="Removed in mature form">
    <location>
        <begin position="61"/>
        <end position="96"/>
    </location>
</feature>
<name>MYNA_MYTGA</name>
<evidence type="ECO:0000269" key="1">
    <source>
    </source>
</evidence>
<protein>
    <recommendedName>
        <fullName>Myticin-A</fullName>
    </recommendedName>
</protein>